<keyword id="KW-1003">Cell membrane</keyword>
<keyword id="KW-0134">Cell wall</keyword>
<keyword id="KW-0175">Coiled coil</keyword>
<keyword id="KW-0472">Membrane</keyword>
<keyword id="KW-1185">Reference proteome</keyword>
<keyword id="KW-0964">Secreted</keyword>
<reference evidence="8" key="1">
    <citation type="journal article" date="2003" name="Science">
        <title>Role of mobile DNA in the evolution of vancomycin-resistant Enterococcus faecalis.</title>
        <authorList>
            <person name="Paulsen I.T."/>
            <person name="Banerjei L."/>
            <person name="Myers G.S.A."/>
            <person name="Nelson K.E."/>
            <person name="Seshadri R."/>
            <person name="Read T.D."/>
            <person name="Fouts D.E."/>
            <person name="Eisen J.A."/>
            <person name="Gill S.R."/>
            <person name="Heidelberg J.F."/>
            <person name="Tettelin H."/>
            <person name="Dodson R.J."/>
            <person name="Umayam L.A."/>
            <person name="Brinkac L.M."/>
            <person name="Beanan M.J."/>
            <person name="Daugherty S.C."/>
            <person name="DeBoy R.T."/>
            <person name="Durkin S.A."/>
            <person name="Kolonay J.F."/>
            <person name="Madupu R."/>
            <person name="Nelson W.C."/>
            <person name="Vamathevan J.J."/>
            <person name="Tran B."/>
            <person name="Upton J."/>
            <person name="Hansen T."/>
            <person name="Shetty J."/>
            <person name="Khouri H.M."/>
            <person name="Utterback T.R."/>
            <person name="Radune D."/>
            <person name="Ketchum K.A."/>
            <person name="Dougherty B.A."/>
            <person name="Fraser C.M."/>
        </authorList>
    </citation>
    <scope>NUCLEOTIDE SEQUENCE [LARGE SCALE GENOMIC DNA]</scope>
    <source>
        <strain evidence="8">ATCC 700802 / V583</strain>
    </source>
</reference>
<reference evidence="6" key="2">
    <citation type="journal article" date="2019" name="Proc. Natl. Acad. Sci. U.S.A.">
        <title>Antimicrobial sensing coupled with cell membrane remodeling mediates antibiotic resistance and virulence in Enterococcus faecalis.</title>
        <authorList>
            <person name="Khan A."/>
            <person name="Davlieva M."/>
            <person name="Panesso D."/>
            <person name="Rincon S."/>
            <person name="Miller W.R."/>
            <person name="Diaz L."/>
            <person name="Reyes J."/>
            <person name="Cruz M.R."/>
            <person name="Pemberton O."/>
            <person name="Nguyen A.H."/>
            <person name="Siegel S.D."/>
            <person name="Planet P.J."/>
            <person name="Narechania A."/>
            <person name="Latorre M."/>
            <person name="Rios R."/>
            <person name="Singh K.V."/>
            <person name="Ton-That H."/>
            <person name="Garsin D.A."/>
            <person name="Tran T.T."/>
            <person name="Shamoo Y."/>
            <person name="Arias C.A."/>
        </authorList>
    </citation>
    <scope>FUNCTION</scope>
    <scope>SUBCELLULAR LOCATION</scope>
    <scope>INDUCTION</scope>
    <scope>DOMAIN</scope>
    <scope>PROTEOLYTIC CLEAVAGE</scope>
    <scope>DISRUPTION PHENOTYPE</scope>
    <source>
        <strain>OG1RF</strain>
        <strain>R712</strain>
        <strain>S613</strain>
    </source>
</reference>
<reference evidence="6" key="3">
    <citation type="journal article" date="2021" name="J. Infect. Chemother.">
        <title>Daptomycin resistant Enterococcus faecalis has a mutation in liaX, which encodes a surface protein that inhibits the LiaFSR systems and cell membrane remodeling.</title>
        <authorList>
            <person name="Ota Y."/>
            <person name="Furuhashi K."/>
            <person name="Hayashi W."/>
            <person name="Hirai N."/>
            <person name="Ishikawa J."/>
            <person name="Nagura O."/>
            <person name="Yamanaka K."/>
            <person name="Katahashi K."/>
            <person name="Aoki K."/>
            <person name="Nagano N."/>
            <person name="Maekawa M."/>
        </authorList>
    </citation>
    <scope>MUTAGENESIS OF 152-ARG--LYS-533</scope>
</reference>
<gene>
    <name evidence="5" type="primary">liaX</name>
    <name evidence="5 7" type="ordered locus">EF_1753</name>
</gene>
<comment type="function">
    <text evidence="3">Involved in cell membrane remodeling, perhaps acting by negative modulation of the liaFSR and liaXYZ gene clusters, thereby regulating content and localization of anionic phospholipids (PubMed:31818937). Binds to the antibiotic daptomycin (DAP) and to cationic antimicrobial peptides, such as human LL-37, perhaps functioning as a sensor that activates the cell envelope stress response (PubMed:31818937).</text>
</comment>
<comment type="subcellular location">
    <subcellularLocation>
        <location evidence="3">Secreted</location>
        <location evidence="3">Cell wall</location>
    </subcellularLocation>
    <subcellularLocation>
        <location evidence="3">Cell membrane</location>
    </subcellularLocation>
    <subcellularLocation>
        <location evidence="3">Secreted</location>
    </subcellularLocation>
    <text evidence="3">Despite lack of predicted classical secretion signals, detected in the extracellular environment.</text>
</comment>
<comment type="induction">
    <text evidence="3">Probably part of a liaX-liaY-liaZ putative operon.</text>
</comment>
<comment type="domain">
    <text evidence="3">The N-terminal region (1-277) is able to bind the antibiotic daptomycin (DAP) and the antimicrobial peptide human LL-37, under physiologically relevant concentrations.</text>
</comment>
<comment type="domain">
    <text evidence="3">The C-terminal region (278-533) is involved in cell membrane remodeling.</text>
</comment>
<comment type="PTM">
    <text evidence="3">May undergo proteolytic cleavage, allowing release of the N-terminal region into the extracellular environment.</text>
</comment>
<comment type="disruption phenotype">
    <text evidence="3">Deletion in the OG1RF strain causes anionic phospholipids to be redistributed away from the division septum; during exponential growth, there are increases in phosphatidylglycerol (PG), decreases in cardiolipin, with no change in lysyl-PG (PubMed:31818937). Confers resistance to the antibiotic daptomycin (DAP) in the OG1RF strain (PubMed:31818937). Resistant to killing of the OG1RF strain by human cathelicidin LL-37 (PubMed:31818937). Deletion in the OG1RF strain increases virulence in nematode C.elegans infection model (PubMed:31818937).</text>
</comment>
<comment type="miscellaneous">
    <text evidence="3">LiaX and its N-terminal region are released into the extracellular environment in daptomycin (DAP) resistant strains, such as R712.</text>
</comment>
<accession>Q834B6</accession>
<proteinExistence type="evidence at protein level"/>
<dbReference type="EMBL" id="AE016830">
    <property type="protein sequence ID" value="AAO81526.1"/>
    <property type="molecule type" value="Genomic_DNA"/>
</dbReference>
<dbReference type="RefSeq" id="NP_815456.1">
    <property type="nucleotide sequence ID" value="NC_004668.1"/>
</dbReference>
<dbReference type="RefSeq" id="WP_002369294.1">
    <property type="nucleotide sequence ID" value="NZ_KE136528.1"/>
</dbReference>
<dbReference type="SMR" id="Q834B6"/>
<dbReference type="STRING" id="226185.EF_1753"/>
<dbReference type="EnsemblBacteria" id="AAO81526">
    <property type="protein sequence ID" value="AAO81526"/>
    <property type="gene ID" value="EF_1753"/>
</dbReference>
<dbReference type="KEGG" id="efa:EF1753"/>
<dbReference type="PATRIC" id="fig|226185.45.peg.1762"/>
<dbReference type="eggNOG" id="COG1196">
    <property type="taxonomic scope" value="Bacteria"/>
</dbReference>
<dbReference type="eggNOG" id="COG3595">
    <property type="taxonomic scope" value="Bacteria"/>
</dbReference>
<dbReference type="HOGENOM" id="CLU_033702_1_0_9"/>
<dbReference type="Proteomes" id="UP000001415">
    <property type="component" value="Chromosome"/>
</dbReference>
<dbReference type="GO" id="GO:0005576">
    <property type="term" value="C:extracellular region"/>
    <property type="evidence" value="ECO:0007669"/>
    <property type="project" value="UniProtKB-SubCell"/>
</dbReference>
<dbReference type="GO" id="GO:0005886">
    <property type="term" value="C:plasma membrane"/>
    <property type="evidence" value="ECO:0007669"/>
    <property type="project" value="UniProtKB-SubCell"/>
</dbReference>
<dbReference type="GO" id="GO:0061024">
    <property type="term" value="P:membrane organization"/>
    <property type="evidence" value="ECO:0000315"/>
    <property type="project" value="UniProtKB"/>
</dbReference>
<dbReference type="GO" id="GO:0046471">
    <property type="term" value="P:phosphatidylglycerol metabolic process"/>
    <property type="evidence" value="ECO:0000315"/>
    <property type="project" value="UniProtKB"/>
</dbReference>
<dbReference type="GO" id="GO:0046677">
    <property type="term" value="P:response to antibiotic"/>
    <property type="evidence" value="ECO:0000315"/>
    <property type="project" value="UniProtKB"/>
</dbReference>
<dbReference type="InterPro" id="IPR025164">
    <property type="entry name" value="Toastrack_DUF4097"/>
</dbReference>
<dbReference type="InterPro" id="IPR053959">
    <property type="entry name" value="YvlB_N"/>
</dbReference>
<dbReference type="NCBIfam" id="NF038025">
    <property type="entry name" value="dapto_LiaX"/>
    <property type="match status" value="1"/>
</dbReference>
<dbReference type="Pfam" id="PF13349">
    <property type="entry name" value="DUF4097"/>
    <property type="match status" value="1"/>
</dbReference>
<dbReference type="Pfam" id="PF22746">
    <property type="entry name" value="SHOCT-like_DUF2089-C"/>
    <property type="match status" value="1"/>
</dbReference>
<evidence type="ECO:0000255" key="1"/>
<evidence type="ECO:0000256" key="2">
    <source>
        <dbReference type="SAM" id="MobiDB-lite"/>
    </source>
</evidence>
<evidence type="ECO:0000269" key="3">
    <source>
    </source>
</evidence>
<evidence type="ECO:0000269" key="4">
    <source>
    </source>
</evidence>
<evidence type="ECO:0000303" key="5">
    <source>
    </source>
</evidence>
<evidence type="ECO:0000305" key="6"/>
<evidence type="ECO:0000312" key="7">
    <source>
        <dbReference type="EMBL" id="AAO81526.1"/>
    </source>
</evidence>
<evidence type="ECO:0000312" key="8">
    <source>
        <dbReference type="Proteomes" id="UP000001415"/>
    </source>
</evidence>
<name>LIAX_ENTFA</name>
<protein>
    <recommendedName>
        <fullName evidence="6">Putative adhesin domain-containing protein LiaX</fullName>
    </recommendedName>
    <alternativeName>
        <fullName evidence="6">Daptomycin-sensing surface protein LiaX</fullName>
    </alternativeName>
</protein>
<feature type="chain" id="PRO_0000459239" description="Putative adhesin domain-containing protein LiaX">
    <location>
        <begin position="1"/>
        <end position="533"/>
    </location>
</feature>
<feature type="region of interest" description="Binds the antibiotic daptomycin (DAP) and the antimicrobial peptide human LL-37, under physiologically relevant concentrations. Protects the OG1RF and S613 strains from LL-37-mediated killing in a concentration-dependent manner" evidence="3">
    <location>
        <begin position="1"/>
        <end position="277"/>
    </location>
</feature>
<feature type="region of interest" description="Disordered" evidence="2">
    <location>
        <begin position="63"/>
        <end position="89"/>
    </location>
</feature>
<feature type="region of interest" description="Putative adhesin region" evidence="6">
    <location>
        <begin position="279"/>
        <end position="526"/>
    </location>
</feature>
<feature type="region of interest" description="Involved in cell membrane remodeling" evidence="3">
    <location>
        <begin position="289"/>
        <end position="526"/>
    </location>
</feature>
<feature type="coiled-coil region" evidence="1">
    <location>
        <begin position="83"/>
        <end position="186"/>
    </location>
</feature>
<feature type="mutagenesis site" description="Confers antibiotic daptomycin (DAP)-resistance in clinical isolate. Increases expression levels of liaS and liaR in DAP-resistant clinical isolate." evidence="4">
    <location>
        <begin position="152"/>
        <end position="533"/>
    </location>
</feature>
<sequence length="533" mass="59595">MKERERVLELVKKGILTSEEALILLENMATEKDEKQIEKAAEKVDTQNIGTTNKEDQVADLMNALEKGESEGPTVDSFEENTQDSAEKDRENLERILDELATKANRASAELDEVNAEIAGIKEEIKEVAEEIGTLDTKEELDALTEDEQVQRKDLHVLLAQLEEKLATQSTEKTALEEELKNIRKEQWKGQWNDTKEKVSSQFSEEWKDQATDTFNQVGGKVAEVGGQVGEFLKKTFNSFSDTMNDNVEWKDIKMKVPGVATTKFEHEFNYPNPQASLIDVKVANGTVVFKTWDQEDVKVEAKIKLYGKMAGDSPMEAFLERSDIDVDDETISFQVPNKRVKADLTFYLPKRTYDHVSVKLLNGNVLVEELTAKDVYTKSTNGTITFKKIDATMLEIEGVNGEIKVLEGTILDNIIETVNGDVSISAAPESLSVSLINGDIRITAKEKTLRRVEASSANGNIKLALPNDLGVEGQVKTNLGSINSRLTDIEVVREKKDRGNQQLHFRRVLEESMAQINASTTTGSIFLKDTDK</sequence>
<organism evidence="8">
    <name type="scientific">Enterococcus faecalis (strain ATCC 700802 / V583)</name>
    <dbReference type="NCBI Taxonomy" id="226185"/>
    <lineage>
        <taxon>Bacteria</taxon>
        <taxon>Bacillati</taxon>
        <taxon>Bacillota</taxon>
        <taxon>Bacilli</taxon>
        <taxon>Lactobacillales</taxon>
        <taxon>Enterococcaceae</taxon>
        <taxon>Enterococcus</taxon>
    </lineage>
</organism>